<keyword id="KW-0244">Early protein</keyword>
<keyword id="KW-0325">Glycoprotein</keyword>
<feature type="chain" id="PRO_0000221752" description="Early E3 20.1 kDa glycoprotein">
    <location>
        <begin position="1"/>
        <end position="179"/>
    </location>
</feature>
<feature type="glycosylation site" description="N-linked (GlcNAc...) asparagine; by host" evidence="1">
    <location>
        <position position="29"/>
    </location>
</feature>
<feature type="glycosylation site" description="N-linked (GlcNAc...) asparagine; by host" evidence="1">
    <location>
        <position position="57"/>
    </location>
</feature>
<feature type="glycosylation site" description="N-linked (GlcNAc...) asparagine; by host" evidence="1">
    <location>
        <position position="70"/>
    </location>
</feature>
<feature type="glycosylation site" description="N-linked (GlcNAc...) asparagine; by host" evidence="1">
    <location>
        <position position="75"/>
    </location>
</feature>
<feature type="glycosylation site" description="N-linked (GlcNAc...) asparagine; by host" evidence="1">
    <location>
        <position position="123"/>
    </location>
</feature>
<name>E320_ADE03</name>
<protein>
    <recommendedName>
        <fullName>Early E3 20.1 kDa glycoprotein</fullName>
    </recommendedName>
</protein>
<comment type="function">
    <text>E3 proteins seem to be dispensable for virus growth in tissue culture cells. They are potentially important for virus growth under special conditions; E3 region may help adenoviruses to evade the immune surveillance of the host.</text>
</comment>
<comment type="similarity">
    <text evidence="2">Belongs to the adenoviridae E3_20 family.</text>
</comment>
<evidence type="ECO:0000255" key="1"/>
<evidence type="ECO:0000305" key="2"/>
<sequence length="179" mass="20059">MASVTALIIASIVTVAHGQTIVHITLGHNHTLVGPPITSEVIWTKLGSVDYFDIICNKTKPIFVICNRQNLTLINVSKIYNGYYYGYDRSSSQYKNYLVRITQPKLTVPTMTIIKMANKALENFTSPTTPNEKNIPNSMIAIIAAVALGMALIIICMLLYACYYKKFQHKQDPLLNFNI</sequence>
<proteinExistence type="inferred from homology"/>
<organismHost>
    <name type="scientific">Homo sapiens</name>
    <name type="common">Human</name>
    <dbReference type="NCBI Taxonomy" id="9606"/>
</organismHost>
<dbReference type="EMBL" id="M15952">
    <property type="protein sequence ID" value="AAA42484.1"/>
    <property type="molecule type" value="Genomic_DNA"/>
</dbReference>
<dbReference type="PIR" id="E29500">
    <property type="entry name" value="ERAD34"/>
</dbReference>
<dbReference type="SMR" id="P11321"/>
<dbReference type="InterPro" id="IPR003471">
    <property type="entry name" value="Adeno_E3_CR1"/>
</dbReference>
<dbReference type="InterPro" id="IPR003470">
    <property type="entry name" value="Adeno_E3_CR2"/>
</dbReference>
<dbReference type="Pfam" id="PF02440">
    <property type="entry name" value="Adeno_E3_CR1"/>
    <property type="match status" value="1"/>
</dbReference>
<dbReference type="Pfam" id="PF02439">
    <property type="entry name" value="Adeno_E3_CR2"/>
    <property type="match status" value="1"/>
</dbReference>
<organism>
    <name type="scientific">Human adenovirus B serotype 3</name>
    <name type="common">HAdV-3</name>
    <name type="synonym">Human adenovirus 3</name>
    <dbReference type="NCBI Taxonomy" id="45659"/>
    <lineage>
        <taxon>Viruses</taxon>
        <taxon>Varidnaviria</taxon>
        <taxon>Bamfordvirae</taxon>
        <taxon>Preplasmiviricota</taxon>
        <taxon>Tectiliviricetes</taxon>
        <taxon>Rowavirales</taxon>
        <taxon>Adenoviridae</taxon>
        <taxon>Mastadenovirus</taxon>
        <taxon>Human mastadenovirus B</taxon>
    </lineage>
</organism>
<accession>P11321</accession>
<reference key="1">
    <citation type="journal article" date="1986" name="Gene">
        <title>Region E3 of human adenoviruses; differences between the oncogenic adenovirus-3 and the non-oncogenic adenovirus-2.</title>
        <authorList>
            <person name="Signaes C."/>
            <person name="Akusjaervi G."/>
            <person name="Pettersson U."/>
        </authorList>
    </citation>
    <scope>NUCLEOTIDE SEQUENCE [GENOMIC DNA]</scope>
</reference>